<gene>
    <name type="primary">DIO2</name>
    <name type="synonym">ITDI2</name>
    <name type="synonym">TXDI2</name>
</gene>
<organism>
    <name type="scientific">Homo sapiens</name>
    <name type="common">Human</name>
    <dbReference type="NCBI Taxonomy" id="9606"/>
    <lineage>
        <taxon>Eukaryota</taxon>
        <taxon>Metazoa</taxon>
        <taxon>Chordata</taxon>
        <taxon>Craniata</taxon>
        <taxon>Vertebrata</taxon>
        <taxon>Euteleostomi</taxon>
        <taxon>Mammalia</taxon>
        <taxon>Eutheria</taxon>
        <taxon>Euarchontoglires</taxon>
        <taxon>Primates</taxon>
        <taxon>Haplorrhini</taxon>
        <taxon>Catarrhini</taxon>
        <taxon>Hominidae</taxon>
        <taxon>Homo</taxon>
    </lineage>
</organism>
<evidence type="ECO:0000255" key="1"/>
<evidence type="ECO:0000255" key="2">
    <source>
        <dbReference type="PROSITE-ProRule" id="PRU10107"/>
    </source>
</evidence>
<evidence type="ECO:0000269" key="3">
    <source>
    </source>
</evidence>
<evidence type="ECO:0000269" key="4">
    <source>
    </source>
</evidence>
<evidence type="ECO:0000269" key="5">
    <source>
    </source>
</evidence>
<evidence type="ECO:0000269" key="6">
    <source>
    </source>
</evidence>
<evidence type="ECO:0000269" key="7">
    <source>
    </source>
</evidence>
<evidence type="ECO:0000269" key="8">
    <source>
    </source>
</evidence>
<evidence type="ECO:0000269" key="9">
    <source>
    </source>
</evidence>
<evidence type="ECO:0000269" key="10">
    <source>
    </source>
</evidence>
<evidence type="ECO:0000269" key="11">
    <source>
    </source>
</evidence>
<evidence type="ECO:0000269" key="12">
    <source>
    </source>
</evidence>
<evidence type="ECO:0000303" key="13">
    <source>
    </source>
</evidence>
<evidence type="ECO:0000305" key="14"/>
<evidence type="ECO:0000305" key="15">
    <source>
    </source>
</evidence>
<evidence type="ECO:0000305" key="16">
    <source>
    </source>
</evidence>
<evidence type="ECO:0000305" key="17">
    <source>
    </source>
</evidence>
<evidence type="ECO:0000305" key="18">
    <source>
    </source>
</evidence>
<evidence type="ECO:0000305" key="19">
    <source>
    </source>
</evidence>
<keyword id="KW-0025">Alternative splicing</keyword>
<keyword id="KW-0256">Endoplasmic reticulum</keyword>
<keyword id="KW-0472">Membrane</keyword>
<keyword id="KW-0560">Oxidoreductase</keyword>
<keyword id="KW-1185">Reference proteome</keyword>
<keyword id="KW-0712">Selenocysteine</keyword>
<keyword id="KW-0893">Thyroid hormones biosynthesis</keyword>
<keyword id="KW-0812">Transmembrane</keyword>
<keyword id="KW-1133">Transmembrane helix</keyword>
<keyword id="KW-0832">Ubl conjugation</keyword>
<reference key="1">
    <citation type="journal article" date="1996" name="J. Clin. Invest.">
        <title>Cloning of the mammalian type II iodothyronine deiodinase. A selenoprotein differentially expressed and regulated in human and rat brain and other tissues.</title>
        <authorList>
            <person name="Croteau W."/>
            <person name="Davey J.C."/>
            <person name="Galton V.A."/>
            <person name="St Germain D.L."/>
        </authorList>
    </citation>
    <scope>NUCLEOTIDE SEQUENCE [MRNA] (ISOFORM 1)</scope>
    <scope>TISSUE SPECIFICITY</scope>
</reference>
<reference key="2">
    <citation type="journal article" date="1998" name="J. Biol. Chem.">
        <title>The 3'-untranslated region of human type 2 iodothyronine deiodinase mRNA contains a functional selenocysteine insertion sequence element.</title>
        <authorList>
            <person name="Buettner C."/>
            <person name="Harney J.W."/>
            <person name="Larsen P.R."/>
        </authorList>
    </citation>
    <scope>NUCLEOTIDE SEQUENCE [MRNA] (ISOFORM 1)</scope>
</reference>
<reference key="3">
    <citation type="journal article" date="2001" name="Mol. Cell. Endocrinol.">
        <title>Identification of two novel splicing variants of human type II iodothyronine deiodinase mRNA.</title>
        <authorList>
            <person name="Ohba K."/>
            <person name="Yoshioka T."/>
            <person name="Muraki T."/>
        </authorList>
    </citation>
    <scope>NUCLEOTIDE SEQUENCE [MRNA] (ISOFORMS 2 AND 3)</scope>
    <scope>ALTERNATIVE SPLICING (ISOFORM 1)</scope>
    <scope>TISSUE SPECIFICITY</scope>
    <source>
        <tissue>Umbilical vein</tissue>
    </source>
</reference>
<reference key="4">
    <citation type="submission" date="1999-07" db="EMBL/GenBank/DDBJ databases">
        <title>Sequencing of human chromosome 14q31 region.</title>
        <authorList>
            <person name="Dickhoff R."/>
            <person name="Madan A."/>
            <person name="Qin S."/>
            <person name="Abbasi N."/>
            <person name="Dors M."/>
            <person name="Rowen L."/>
            <person name="Harrison G."/>
            <person name="James R."/>
            <person name="Loretz C."/>
            <person name="Lasky S."/>
            <person name="Madan A."/>
            <person name="Prescott S."/>
            <person name="Ratcliffe A."/>
            <person name="Shaffer T."/>
            <person name="Hood L."/>
        </authorList>
    </citation>
    <scope>NUCLEOTIDE SEQUENCE [GENOMIC DNA]</scope>
</reference>
<reference key="5">
    <citation type="journal article" date="2003" name="Nature">
        <title>The DNA sequence and analysis of human chromosome 14.</title>
        <authorList>
            <person name="Heilig R."/>
            <person name="Eckenberg R."/>
            <person name="Petit J.-L."/>
            <person name="Fonknechten N."/>
            <person name="Da Silva C."/>
            <person name="Cattolico L."/>
            <person name="Levy M."/>
            <person name="Barbe V."/>
            <person name="De Berardinis V."/>
            <person name="Ureta-Vidal A."/>
            <person name="Pelletier E."/>
            <person name="Vico V."/>
            <person name="Anthouard V."/>
            <person name="Rowen L."/>
            <person name="Madan A."/>
            <person name="Qin S."/>
            <person name="Sun H."/>
            <person name="Du H."/>
            <person name="Pepin K."/>
            <person name="Artiguenave F."/>
            <person name="Robert C."/>
            <person name="Cruaud C."/>
            <person name="Bruels T."/>
            <person name="Jaillon O."/>
            <person name="Friedlander L."/>
            <person name="Samson G."/>
            <person name="Brottier P."/>
            <person name="Cure S."/>
            <person name="Segurens B."/>
            <person name="Aniere F."/>
            <person name="Samain S."/>
            <person name="Crespeau H."/>
            <person name="Abbasi N."/>
            <person name="Aiach N."/>
            <person name="Boscus D."/>
            <person name="Dickhoff R."/>
            <person name="Dors M."/>
            <person name="Dubois I."/>
            <person name="Friedman C."/>
            <person name="Gouyvenoux M."/>
            <person name="James R."/>
            <person name="Madan A."/>
            <person name="Mairey-Estrada B."/>
            <person name="Mangenot S."/>
            <person name="Martins N."/>
            <person name="Menard M."/>
            <person name="Oztas S."/>
            <person name="Ratcliffe A."/>
            <person name="Shaffer T."/>
            <person name="Trask B."/>
            <person name="Vacherie B."/>
            <person name="Bellemere C."/>
            <person name="Belser C."/>
            <person name="Besnard-Gonnet M."/>
            <person name="Bartol-Mavel D."/>
            <person name="Boutard M."/>
            <person name="Briez-Silla S."/>
            <person name="Combette S."/>
            <person name="Dufosse-Laurent V."/>
            <person name="Ferron C."/>
            <person name="Lechaplais C."/>
            <person name="Louesse C."/>
            <person name="Muselet D."/>
            <person name="Magdelenat G."/>
            <person name="Pateau E."/>
            <person name="Petit E."/>
            <person name="Sirvain-Trukniewicz P."/>
            <person name="Trybou A."/>
            <person name="Vega-Czarny N."/>
            <person name="Bataille E."/>
            <person name="Bluet E."/>
            <person name="Bordelais I."/>
            <person name="Dubois M."/>
            <person name="Dumont C."/>
            <person name="Guerin T."/>
            <person name="Haffray S."/>
            <person name="Hammadi R."/>
            <person name="Muanga J."/>
            <person name="Pellouin V."/>
            <person name="Robert D."/>
            <person name="Wunderle E."/>
            <person name="Gauguet G."/>
            <person name="Roy A."/>
            <person name="Sainte-Marthe L."/>
            <person name="Verdier J."/>
            <person name="Verdier-Discala C."/>
            <person name="Hillier L.W."/>
            <person name="Fulton L."/>
            <person name="McPherson J."/>
            <person name="Matsuda F."/>
            <person name="Wilson R."/>
            <person name="Scarpelli C."/>
            <person name="Gyapay G."/>
            <person name="Wincker P."/>
            <person name="Saurin W."/>
            <person name="Quetier F."/>
            <person name="Waterston R."/>
            <person name="Hood L."/>
            <person name="Weissenbach J."/>
        </authorList>
    </citation>
    <scope>NUCLEOTIDE SEQUENCE [LARGE SCALE GENOMIC DNA]</scope>
</reference>
<reference key="6">
    <citation type="journal article" date="2004" name="Genome Res.">
        <title>The status, quality, and expansion of the NIH full-length cDNA project: the Mammalian Gene Collection (MGC).</title>
        <authorList>
            <consortium name="The MGC Project Team"/>
        </authorList>
    </citation>
    <scope>NUCLEOTIDE SEQUENCE [LARGE SCALE MRNA] (ISOFORM 1)</scope>
    <source>
        <tissue>Lung</tissue>
        <tissue>Testis</tissue>
    </source>
</reference>
<reference key="7">
    <citation type="journal article" date="1999" name="Biochimie">
        <title>Mutation of the Secys residue 266 in human type 2 selenodeiodinase alters 75Se incorporation without affecting its biochemical properties.</title>
        <authorList>
            <person name="Salvatore D."/>
            <person name="Harney J.W."/>
            <person name="Larsen P.R."/>
        </authorList>
    </citation>
    <scope>FUNCTION</scope>
    <scope>CATALYTIC ACTIVITY</scope>
    <scope>BIOPHYSICOCHEMICAL PROPERTIES</scope>
    <scope>MUTAGENESIS OF SEC-266</scope>
    <scope>SELENOCYSTEINE AT SEC-266</scope>
</reference>
<reference key="8">
    <citation type="journal article" date="2000" name="Endocrinology">
        <title>Distinct subcellular localization of transiently expressed types 1 and 2 iodothyronine deiodinases as determined by immunofluorescence confocal microscopy.</title>
        <authorList>
            <person name="Baqui M.M."/>
            <person name="Gereben B."/>
            <person name="Harney J.W."/>
            <person name="Larsen P.R."/>
            <person name="Bianco A.C."/>
        </authorList>
    </citation>
    <scope>SUBCELLULAR LOCATION</scope>
    <scope>TOPOLOGY</scope>
</reference>
<reference key="9">
    <citation type="journal article" date="2000" name="Endocrinology">
        <title>The role of selenocysteine 133 in catalysis by the human type 2 iodothyronine deiodinase.</title>
        <authorList>
            <person name="Buettner C."/>
            <person name="Harney J.W."/>
            <person name="Larsen P.R."/>
        </authorList>
    </citation>
    <scope>FUNCTION</scope>
    <scope>CATALYTIC ACTIVITY</scope>
    <scope>BIOPHYSICOCHEMICAL PROPERTIES</scope>
    <scope>MUTAGENESIS OF SEC-133</scope>
    <scope>SELENOCYSTEINE AT SEC-133</scope>
    <scope>ACTIVE SITE</scope>
</reference>
<reference key="10">
    <citation type="journal article" date="2003" name="Endocrinology">
        <title>In vivo dimerization of types 1, 2, and 3 iodothyronine selenodeiodinases.</title>
        <authorList>
            <person name="Curcio-Morelli C."/>
            <person name="Gereben B."/>
            <person name="Zavacki A.M."/>
            <person name="Kim B.W."/>
            <person name="Huang S."/>
            <person name="Harney J.W."/>
            <person name="Larsen P.R."/>
            <person name="Bianco A.C."/>
        </authorList>
    </citation>
    <scope>FUNCTION</scope>
    <scope>CATALYTIC ACTIVITY</scope>
    <scope>SUBUNIT</scope>
</reference>
<reference key="11">
    <citation type="journal article" date="2003" name="J. Clin. Invest.">
        <title>Deubiquitination of type 2 iodothyronine deiodinase by von Hippel-Lindau protein-interacting deubiquitinating enzymes regulates thyroid hormone activation.</title>
        <authorList>
            <person name="Curcio-Morelli C."/>
            <person name="Zavacki A.M."/>
            <person name="Christofollete M."/>
            <person name="Gereben B."/>
            <person name="de Freitas B.C."/>
            <person name="Harney J.W."/>
            <person name="Li Z."/>
            <person name="Wu G."/>
            <person name="Bianco A.C."/>
        </authorList>
    </citation>
    <scope>UBIQUITINATION</scope>
    <scope>DEUBIQUITINATION BY USP20 AND USP33</scope>
    <scope>INTERACTION WITH USP20 AND USP33</scope>
</reference>
<reference key="12">
    <citation type="journal article" date="2008" name="Endocrinology">
        <title>Thyronamines are isozyme-specific substrates of deiodinases.</title>
        <authorList>
            <person name="Piehl S."/>
            <person name="Heberer T."/>
            <person name="Balizs G."/>
            <person name="Scanlan T.S."/>
            <person name="Smits R."/>
            <person name="Koksch B."/>
            <person name="Koehrle J."/>
        </authorList>
    </citation>
    <scope>FUNCTION</scope>
    <scope>CATALYTIC ACTIVITY</scope>
    <scope>BIOPHYSICOCHEMICAL PROPERTIES</scope>
</reference>
<reference key="13">
    <citation type="journal article" date="2008" name="Rapid Commun. Mass Spectrom.">
        <title>Development of a validated liquid chromatography/tandem mass spectrometry method for the distinction of thyronine and thyronamine constitutional isomers and for the identification of new deiodinase substrates.</title>
        <authorList>
            <person name="Piehl S."/>
            <person name="Heberer T."/>
            <person name="Balizs G."/>
            <person name="Scanlan T.S."/>
            <person name="Koehrle J."/>
        </authorList>
    </citation>
    <scope>FUNCTION</scope>
    <scope>CATALYTIC ACTIVITY</scope>
</reference>
<reference key="14">
    <citation type="journal article" date="2009" name="Mol. Cell. Biol.">
        <title>The E3 ubiquitin ligase TEB4 mediates degradation of type 2 iodothyronine deiodinase.</title>
        <authorList>
            <person name="Zavacki A.M."/>
            <person name="Arrojo E Drigo R."/>
            <person name="Freitas B.C."/>
            <person name="Chung M."/>
            <person name="Harney J.W."/>
            <person name="Egri P."/>
            <person name="Wittmann G."/>
            <person name="Fekete C."/>
            <person name="Gereben B."/>
            <person name="Bianco A.C."/>
        </authorList>
    </citation>
    <scope>UBIQUITINATION BY MARCHF6</scope>
    <scope>INTERACTION WITH MARCHF6</scope>
</reference>
<sequence length="273" mass="30552">MGILSVDLLITLQILPVFFSNCLFLALYDSVILLKHVVLLLSRSKSTRGEWRRMLTSEGLRCVWKSFLLDAYKQVKLGEDAPNSSVVHVSSTEGGDNSGNGTQEKIAEGATCHLLDFASPERPLVVNFGSATUPPFTSQLPAFRKLVEEFSSVADFLLVYIDEAHPSDGWAIPGDSSLSFEVKKHQNQEDRCAAAQQLLERFSLPPQCRVVADRMDNNANIAYGVAFERVCIVQRQKIAYLGGKGPFSYNLQEVRHWLEKNFSKRUKKTRLAG</sequence>
<comment type="function">
    <text evidence="3 5 7 9 10">Plays a crucial role in the metabolism of thyroid hormones (TH) and has specific roles in TH activation and inactivation by deiodination (PubMed:12586771, PubMed:11108274, PubMed:10403186, PubMed:18821722). Catalyzes the deiodination of L-thyroxine (T4) to 3,5,3'-triiodothyronine (T3), 3,3',5'-triiodothyronine (rT3) to 3,3'-diiodothyronine (3,3'-T2) and 3',5'-diiodothyronine (3',5'-T2) to 3'-monoiodothyronine (3'-T1) via outer-ring deiodination (ORD) (PubMed:12586771, PubMed:11108274, PubMed:10403186, PubMed:18821722, PubMed:18339710). Catalyzes the phenolic ring deiodinations of 3,3',5'-triiodothyronamine and 3',5'- diiodothyronamine (PubMed:18339710).</text>
</comment>
<comment type="catalytic activity">
    <reaction evidence="2 3 5 7 10">
        <text>3,3',5-triiodo-L-thyronine + iodide + A + H(+) = L-thyroxine + AH2</text>
        <dbReference type="Rhea" id="RHEA:19745"/>
        <dbReference type="ChEBI" id="CHEBI:13193"/>
        <dbReference type="ChEBI" id="CHEBI:15378"/>
        <dbReference type="ChEBI" id="CHEBI:16382"/>
        <dbReference type="ChEBI" id="CHEBI:17499"/>
        <dbReference type="ChEBI" id="CHEBI:58448"/>
        <dbReference type="ChEBI" id="CHEBI:533015"/>
        <dbReference type="EC" id="1.21.99.4"/>
    </reaction>
    <physiologicalReaction direction="right-to-left" evidence="17">
        <dbReference type="Rhea" id="RHEA:19747"/>
    </physiologicalReaction>
</comment>
<comment type="catalytic activity">
    <reaction evidence="5 9 10">
        <text>3,3'-diiodo-L-thyronine + iodide + A + H(+) = 3,3',5'-triiodo-L-thyronine + AH2</text>
        <dbReference type="Rhea" id="RHEA:82575"/>
        <dbReference type="ChEBI" id="CHEBI:13193"/>
        <dbReference type="ChEBI" id="CHEBI:15378"/>
        <dbReference type="ChEBI" id="CHEBI:16382"/>
        <dbReference type="ChEBI" id="CHEBI:17499"/>
        <dbReference type="ChEBI" id="CHEBI:57261"/>
        <dbReference type="ChEBI" id="CHEBI:176514"/>
    </reaction>
    <physiologicalReaction direction="right-to-left" evidence="16">
        <dbReference type="Rhea" id="RHEA:82577"/>
    </physiologicalReaction>
</comment>
<comment type="catalytic activity">
    <reaction evidence="10">
        <text>3'-iodo-L-thyronine + iodide + A + H(+) = 3',5'-diiodo-L-thyronine + AH2</text>
        <dbReference type="Rhea" id="RHEA:82899"/>
        <dbReference type="ChEBI" id="CHEBI:13193"/>
        <dbReference type="ChEBI" id="CHEBI:15378"/>
        <dbReference type="ChEBI" id="CHEBI:16382"/>
        <dbReference type="ChEBI" id="CHEBI:17499"/>
        <dbReference type="ChEBI" id="CHEBI:195762"/>
        <dbReference type="ChEBI" id="CHEBI:232695"/>
    </reaction>
    <physiologicalReaction direction="right-to-left" evidence="19">
        <dbReference type="Rhea" id="RHEA:82901"/>
    </physiologicalReaction>
</comment>
<comment type="catalytic activity">
    <reaction evidence="9">
        <text>3,3'-diiodothyronamine + iodide + A + H(+) = 3,3',5'-triiodothyronamine + AH2</text>
        <dbReference type="Rhea" id="RHEA:83795"/>
        <dbReference type="ChEBI" id="CHEBI:13193"/>
        <dbReference type="ChEBI" id="CHEBI:15378"/>
        <dbReference type="ChEBI" id="CHEBI:16382"/>
        <dbReference type="ChEBI" id="CHEBI:17499"/>
        <dbReference type="ChEBI" id="CHEBI:233341"/>
        <dbReference type="ChEBI" id="CHEBI:233343"/>
    </reaction>
    <physiologicalReaction direction="right-to-left" evidence="18">
        <dbReference type="Rhea" id="RHEA:83797"/>
    </physiologicalReaction>
</comment>
<comment type="catalytic activity">
    <reaction evidence="9">
        <text>3'-iodothyronamine + iodide + A + H(+) = 3',5'-diiodothyronamine + AH2</text>
        <dbReference type="Rhea" id="RHEA:83803"/>
        <dbReference type="ChEBI" id="CHEBI:13193"/>
        <dbReference type="ChEBI" id="CHEBI:15378"/>
        <dbReference type="ChEBI" id="CHEBI:16382"/>
        <dbReference type="ChEBI" id="CHEBI:17499"/>
        <dbReference type="ChEBI" id="CHEBI:233339"/>
        <dbReference type="ChEBI" id="CHEBI:233342"/>
    </reaction>
    <physiologicalReaction direction="right-to-left" evidence="18">
        <dbReference type="Rhea" id="RHEA:83805"/>
    </physiologicalReaction>
</comment>
<comment type="biophysicochemical properties">
    <kinetics>
        <KM evidence="5">0.0016 uM for L-thyroxine</KM>
        <KM evidence="3">2.8 nM for L-thyroxine</KM>
        <KM evidence="9">0.005 uM for 3,3',5'-triiodothyronine</KM>
        <KM evidence="9">0.006 uM for 3,3',5'-triiodothyronamine</KM>
        <Vmax evidence="5">0.81 pmol/min/mg enzyme towards L-thyroxine</Vmax>
        <Vmax evidence="3">2.51 pmol/min/mg enzyme towards L-thyroxine</Vmax>
        <Vmax evidence="9">0.13 pmol/min/mg enzyme towards 3,3',5'-triiodothyronine</Vmax>
        <Vmax evidence="9">0.088 pmol/min/mg enzyme towards 3,3',5'-triiodothyronamine</Vmax>
    </kinetics>
</comment>
<comment type="subunit">
    <text evidence="7 8 11">Predominantly monomer. Can form homodimers but homodimerization is not essential for enzyme activity (PubMed:12586771). Interacts with USP20 and USP33. Interacts with MARCHF6.</text>
</comment>
<comment type="subcellular location">
    <subcellularLocation>
        <location evidence="4">Endoplasmic reticulum membrane</location>
        <topology evidence="15">Single-pass type III membrane protein</topology>
    </subcellularLocation>
</comment>
<comment type="alternative products">
    <event type="alternative splicing"/>
    <isoform>
        <id>Q92813-1</id>
        <name>1</name>
        <name>hDII-a</name>
        <sequence type="displayed"/>
    </isoform>
    <isoform>
        <id>Q92813-2</id>
        <name>2</name>
        <name>hDII-b</name>
        <sequence type="described" ref="VSP_026154"/>
    </isoform>
    <isoform>
        <id>Q92813-3</id>
        <name>3</name>
        <name>hDII-c</name>
        <sequence type="described" ref="VSP_060028 VSP_060029 VSP_060030"/>
    </isoform>
</comment>
<comment type="tissue specificity">
    <text evidence="6 12">Isoform 1 is expressed in the lung, trachea, kidney, heart, skeletal muscle, placenta, fetal brain and several regions of the adult brain (PubMed:11165050, PubMed:8755651). Isoform 2 is expressed in the brain, heart, kidney and trachea (PubMed:11165050).</text>
</comment>
<comment type="PTM">
    <text evidence="8 11">Ubiquitinated by MARCHF6, leading to its degradation by the proteasome. Deubiquitinated by USP20 and USP33.</text>
</comment>
<comment type="miscellaneous">
    <molecule>Isoform 2</molecule>
    <text evidence="14">Has a Sec in positions 90, 169 and 302.</text>
</comment>
<comment type="miscellaneous">
    <molecule>Isoform 3</molecule>
    <text evidence="14">Has a Sec in position 37.</text>
</comment>
<comment type="similarity">
    <text evidence="14">Belongs to the iodothyronine deiodinase family.</text>
</comment>
<comment type="sequence caution" evidence="14">
    <conflict type="erroneous initiation">
        <sequence resource="EMBL-CDS" id="AAC95470"/>
    </conflict>
    <text>Extended N-terminus.</text>
</comment>
<comment type="online information" name="Atlas of Genetics and Cytogenetics in Oncology and Haematology">
    <link uri="https://atlasgeneticsoncology.org/gene/44390/DIO2"/>
</comment>
<feature type="chain" id="PRO_0000154317" description="Type II iodothyronine deiodinase">
    <location>
        <begin position="1"/>
        <end position="273"/>
    </location>
</feature>
<feature type="topological domain" description="Lumenal" evidence="15">
    <location>
        <begin position="1"/>
        <end position="9"/>
    </location>
</feature>
<feature type="transmembrane region" description="Helical; Signal-anchor for type III membrane protein" evidence="1">
    <location>
        <begin position="10"/>
        <end position="34"/>
    </location>
</feature>
<feature type="topological domain" description="Cytoplasmic" evidence="15">
    <location>
        <begin position="35"/>
        <end position="273"/>
    </location>
</feature>
<feature type="active site" evidence="5">
    <location>
        <position position="133"/>
    </location>
</feature>
<feature type="non-standard amino acid" description="Selenocysteine" evidence="5">
    <location>
        <position position="133"/>
    </location>
</feature>
<feature type="non-standard amino acid" description="Selenocysteine" evidence="3">
    <location>
        <position position="266"/>
    </location>
</feature>
<feature type="splice variant" id="VSP_060028" description="In isoform 3.">
    <location>
        <begin position="1"/>
        <end position="53"/>
    </location>
</feature>
<feature type="splice variant" id="VSP_026154" description="In isoform 2." evidence="13">
    <original>Q</original>
    <variation>QLNCPPSGFSKDGHILCLVYEAYKSRLLVYSHLDLWM</variation>
    <location>
        <position position="74"/>
    </location>
</feature>
<feature type="splice variant" id="VSP_060029" description="In isoform 3.">
    <original>VKLGEDAPNSSVVHVSSTEGGDNSGNGTQEKIAEGATCHLLDFASPERPLVVNFGSATUPPFTSQLPAFRKL</original>
    <variation>LNCPPSGFSKDGHILULVYEAYKSRLLVYSHLDLWMTDSVVLTLNFPRQISLCFGKNSAAELYIVSKKEKVP</variation>
    <location>
        <begin position="75"/>
        <end position="146"/>
    </location>
</feature>
<feature type="splice variant" id="VSP_060030" description="In isoform 3.">
    <location>
        <begin position="147"/>
        <end position="273"/>
    </location>
</feature>
<feature type="sequence variant" id="VAR_049640" description="In dbSNP:rs2839859.">
    <original>A</original>
    <variation>D</variation>
    <location>
        <position position="81"/>
    </location>
</feature>
<feature type="sequence variant" id="VAR_047549" description="In dbSNP:rs225014.">
    <original>T</original>
    <variation>A</variation>
    <location>
        <position position="92"/>
    </location>
</feature>
<feature type="mutagenesis site" description="Complete loss of enzyme activity towards L-thyroxine." evidence="5">
    <original>U</original>
    <variation>A</variation>
    <location>
        <position position="133"/>
    </location>
</feature>
<feature type="mutagenesis site" description="1000-fold increase of Km and Vmax value for L-thyroxine." evidence="5">
    <original>U</original>
    <variation>C</variation>
    <location>
        <position position="133"/>
    </location>
</feature>
<feature type="mutagenesis site" description="No effect on enzyme activity towards L-thyroxine." evidence="3">
    <original>U</original>
    <variation>C</variation>
    <location>
        <position position="266"/>
    </location>
</feature>
<feature type="sequence conflict" description="In Ref. 3; BAB16838." evidence="14" ref="3">
    <original>L</original>
    <variation>P</variation>
    <location>
        <position position="198"/>
    </location>
</feature>
<name>IOD2_HUMAN</name>
<protein>
    <recommendedName>
        <fullName>Type II iodothyronine deiodinase</fullName>
        <ecNumber evidence="3 5 7">1.21.99.4</ecNumber>
    </recommendedName>
    <alternativeName>
        <fullName>5DII</fullName>
    </alternativeName>
    <alternativeName>
        <fullName>DIOII</fullName>
    </alternativeName>
    <alternativeName>
        <fullName>Type 2 DI</fullName>
    </alternativeName>
    <alternativeName>
        <fullName>Type-II 5'-deiodinase</fullName>
    </alternativeName>
</protein>
<accession>Q92813</accession>
<accession>B9EGK0</accession>
<accession>G3V315</accession>
<accession>Q6B0A3</accession>
<accession>Q9HCP7</accession>
<accession>Q9HCP8</accession>
<accession>Q9P1W4</accession>
<accession>Q9UDZ1</accession>
<proteinExistence type="evidence at protein level"/>
<dbReference type="EC" id="1.21.99.4" evidence="3 5 7"/>
<dbReference type="EMBL" id="U53506">
    <property type="protein sequence ID" value="AAC50663.1"/>
    <property type="molecule type" value="mRNA"/>
</dbReference>
<dbReference type="EMBL" id="AF093774">
    <property type="protein sequence ID" value="AAC95470.1"/>
    <property type="status" value="ALT_INIT"/>
    <property type="molecule type" value="mRNA"/>
</dbReference>
<dbReference type="EMBL" id="AB041843">
    <property type="protein sequence ID" value="BAB16838.1"/>
    <property type="molecule type" value="mRNA"/>
</dbReference>
<dbReference type="EMBL" id="AB041844">
    <property type="protein sequence ID" value="BAB16839.1"/>
    <property type="molecule type" value="mRNA"/>
</dbReference>
<dbReference type="EMBL" id="AC007372">
    <property type="protein sequence ID" value="AAD45494.1"/>
    <property type="molecule type" value="Genomic_DNA"/>
</dbReference>
<dbReference type="EMBL" id="AC010849">
    <property type="status" value="NOT_ANNOTATED_CDS"/>
    <property type="molecule type" value="Genomic_DNA"/>
</dbReference>
<dbReference type="EMBL" id="AL049837">
    <property type="status" value="NOT_ANNOTATED_CDS"/>
    <property type="molecule type" value="Genomic_DNA"/>
</dbReference>
<dbReference type="EMBL" id="BC074882">
    <property type="protein sequence ID" value="AAH74882.1"/>
    <property type="molecule type" value="mRNA"/>
</dbReference>
<dbReference type="EMBL" id="BC136514">
    <property type="protein sequence ID" value="AAI36515.1"/>
    <property type="molecule type" value="mRNA"/>
</dbReference>
<dbReference type="CCDS" id="CCDS45146.1">
    <molecule id="Q92813-1"/>
</dbReference>
<dbReference type="RefSeq" id="NP_000784.2">
    <property type="nucleotide sequence ID" value="NM_000793.5"/>
</dbReference>
<dbReference type="RefSeq" id="NP_001007024.1">
    <property type="nucleotide sequence ID" value="NM_001007023.4"/>
</dbReference>
<dbReference type="RefSeq" id="NP_001229431.1">
    <property type="nucleotide sequence ID" value="NM_001242502.2"/>
</dbReference>
<dbReference type="RefSeq" id="NP_001229432.1">
    <property type="nucleotide sequence ID" value="NM_001242503.2"/>
</dbReference>
<dbReference type="RefSeq" id="NP_001311391.1">
    <property type="nucleotide sequence ID" value="NM_001324462.1"/>
</dbReference>
<dbReference type="RefSeq" id="NP_054644.1">
    <molecule id="Q92813-1"/>
    <property type="nucleotide sequence ID" value="NM_013989.5"/>
</dbReference>
<dbReference type="BioGRID" id="108078">
    <property type="interactions" value="17"/>
</dbReference>
<dbReference type="FunCoup" id="Q92813">
    <property type="interactions" value="575"/>
</dbReference>
<dbReference type="STRING" id="9606.ENSP00000451419"/>
<dbReference type="ChEMBL" id="CHEMBL3542431"/>
<dbReference type="DrugBank" id="DB09100">
    <property type="generic name" value="Thyroid, porcine"/>
</dbReference>
<dbReference type="GlyGen" id="Q92813">
    <property type="glycosylation" value="1 site"/>
</dbReference>
<dbReference type="BioMuta" id="DIO2"/>
<dbReference type="DMDM" id="172045839"/>
<dbReference type="MassIVE" id="Q92813"/>
<dbReference type="PeptideAtlas" id="Q92813"/>
<dbReference type="Antibodypedia" id="47379">
    <property type="antibodies" value="203 antibodies from 31 providers"/>
</dbReference>
<dbReference type="DNASU" id="1734"/>
<dbReference type="Ensembl" id="ENST00000438257.9">
    <molecule id="Q92813-1"/>
    <property type="protein sequence ID" value="ENSP00000405854.5"/>
    <property type="gene ID" value="ENSG00000211448.14"/>
</dbReference>
<dbReference type="Ensembl" id="ENST00000557010.5">
    <molecule id="Q92813-1"/>
    <property type="protein sequence ID" value="ENSP00000451419.1"/>
    <property type="gene ID" value="ENSG00000211448.14"/>
</dbReference>
<dbReference type="GeneID" id="1734"/>
<dbReference type="KEGG" id="hsa:1734"/>
<dbReference type="MANE-Select" id="ENST00000438257.9">
    <property type="protein sequence ID" value="ENSP00000405854.5"/>
    <property type="RefSeq nucleotide sequence ID" value="NM_013989.5"/>
    <property type="RefSeq protein sequence ID" value="NP_054644.1"/>
</dbReference>
<dbReference type="UCSC" id="uc010asy.4">
    <molecule id="Q92813-1"/>
    <property type="organism name" value="human"/>
</dbReference>
<dbReference type="AGR" id="HGNC:2884"/>
<dbReference type="CTD" id="1734"/>
<dbReference type="DisGeNET" id="1734"/>
<dbReference type="GeneCards" id="DIO2"/>
<dbReference type="HGNC" id="HGNC:2884">
    <property type="gene designation" value="DIO2"/>
</dbReference>
<dbReference type="HPA" id="ENSG00000211448">
    <property type="expression patterns" value="Tissue enhanced (cervix, thyroid gland)"/>
</dbReference>
<dbReference type="MIM" id="601413">
    <property type="type" value="gene"/>
</dbReference>
<dbReference type="neXtProt" id="NX_Q92813"/>
<dbReference type="OpenTargets" id="ENSG00000211448"/>
<dbReference type="PharmGKB" id="PA27338"/>
<dbReference type="VEuPathDB" id="HostDB:ENSG00000211448"/>
<dbReference type="GeneTree" id="ENSGT00940000154482"/>
<dbReference type="HOGENOM" id="CLU_089345_1_0_1"/>
<dbReference type="InParanoid" id="Q92813"/>
<dbReference type="OMA" id="KSIWNSF"/>
<dbReference type="OrthoDB" id="9473812at2759"/>
<dbReference type="PAN-GO" id="Q92813">
    <property type="GO annotations" value="2 GO annotations based on evolutionary models"/>
</dbReference>
<dbReference type="PhylomeDB" id="Q92813"/>
<dbReference type="TreeFam" id="TF329721"/>
<dbReference type="BioCyc" id="MetaCyc:HS00008-MONOMER"/>
<dbReference type="BRENDA" id="1.21.99.4">
    <property type="organism ID" value="2681"/>
</dbReference>
<dbReference type="PathwayCommons" id="Q92813"/>
<dbReference type="Reactome" id="R-HSA-350864">
    <property type="pathway name" value="Regulation of thyroid hormone activity"/>
</dbReference>
<dbReference type="Reactome" id="R-HSA-9844594">
    <property type="pathway name" value="Transcriptional regulation of brown and beige adipocyte differentiation by EBF2"/>
</dbReference>
<dbReference type="SABIO-RK" id="Q92813"/>
<dbReference type="SignaLink" id="Q92813"/>
<dbReference type="SIGNOR" id="Q92813"/>
<dbReference type="BioGRID-ORCS" id="1734">
    <property type="hits" value="14 hits in 1139 CRISPR screens"/>
</dbReference>
<dbReference type="ChiTaRS" id="DIO2">
    <property type="organism name" value="human"/>
</dbReference>
<dbReference type="GeneWiki" id="DIO2"/>
<dbReference type="GenomeRNAi" id="1734"/>
<dbReference type="Pharos" id="Q92813">
    <property type="development level" value="Tbio"/>
</dbReference>
<dbReference type="PRO" id="PR:Q92813"/>
<dbReference type="Proteomes" id="UP000005640">
    <property type="component" value="Chromosome 14"/>
</dbReference>
<dbReference type="RNAct" id="Q92813">
    <property type="molecule type" value="protein"/>
</dbReference>
<dbReference type="Bgee" id="ENSG00000211448">
    <property type="expression patterns" value="Expressed in pharyngeal mucosa and 187 other cell types or tissues"/>
</dbReference>
<dbReference type="ExpressionAtlas" id="Q92813">
    <property type="expression patterns" value="baseline and differential"/>
</dbReference>
<dbReference type="GO" id="GO:0005789">
    <property type="term" value="C:endoplasmic reticulum membrane"/>
    <property type="evidence" value="ECO:0000314"/>
    <property type="project" value="UniProtKB"/>
</dbReference>
<dbReference type="GO" id="GO:0016020">
    <property type="term" value="C:membrane"/>
    <property type="evidence" value="ECO:0000305"/>
    <property type="project" value="UniProtKB"/>
</dbReference>
<dbReference type="GO" id="GO:0005886">
    <property type="term" value="C:plasma membrane"/>
    <property type="evidence" value="ECO:0000304"/>
    <property type="project" value="Reactome"/>
</dbReference>
<dbReference type="GO" id="GO:0008430">
    <property type="term" value="F:selenium binding"/>
    <property type="evidence" value="ECO:0000304"/>
    <property type="project" value="ProtInc"/>
</dbReference>
<dbReference type="GO" id="GO:0004800">
    <property type="term" value="F:thyroxine 5'-deiodinase activity"/>
    <property type="evidence" value="ECO:0000314"/>
    <property type="project" value="UniProtKB"/>
</dbReference>
<dbReference type="GO" id="GO:0033798">
    <property type="term" value="F:thyroxine 5-deiodinase activity"/>
    <property type="evidence" value="ECO:0000314"/>
    <property type="project" value="ARUK-UCL"/>
</dbReference>
<dbReference type="GO" id="GO:0031625">
    <property type="term" value="F:ubiquitin protein ligase binding"/>
    <property type="evidence" value="ECO:0000353"/>
    <property type="project" value="UniProtKB"/>
</dbReference>
<dbReference type="GO" id="GO:0042446">
    <property type="term" value="P:hormone biosynthetic process"/>
    <property type="evidence" value="ECO:0007669"/>
    <property type="project" value="UniProtKB-KW"/>
</dbReference>
<dbReference type="GO" id="GO:0120162">
    <property type="term" value="P:positive regulation of cold-induced thermogenesis"/>
    <property type="evidence" value="ECO:0000250"/>
    <property type="project" value="YuBioLab"/>
</dbReference>
<dbReference type="GO" id="GO:0032496">
    <property type="term" value="P:response to lipopolysaccharide"/>
    <property type="evidence" value="ECO:0007669"/>
    <property type="project" value="Ensembl"/>
</dbReference>
<dbReference type="GO" id="GO:0001514">
    <property type="term" value="P:selenocysteine incorporation"/>
    <property type="evidence" value="ECO:0000303"/>
    <property type="project" value="UniProtKB"/>
</dbReference>
<dbReference type="GO" id="GO:0042404">
    <property type="term" value="P:thyroid hormone catabolic process"/>
    <property type="evidence" value="ECO:0000314"/>
    <property type="project" value="UniProtKB"/>
</dbReference>
<dbReference type="GO" id="GO:0006590">
    <property type="term" value="P:thyroid hormone generation"/>
    <property type="evidence" value="ECO:0000304"/>
    <property type="project" value="UniProtKB"/>
</dbReference>
<dbReference type="GO" id="GO:0042403">
    <property type="term" value="P:thyroid hormone metabolic process"/>
    <property type="evidence" value="ECO:0000314"/>
    <property type="project" value="UniProtKB"/>
</dbReference>
<dbReference type="FunFam" id="3.40.30.10:FF:000194">
    <property type="entry name" value="Iodothyronine deiodinase"/>
    <property type="match status" value="1"/>
</dbReference>
<dbReference type="Gene3D" id="3.40.30.10">
    <property type="entry name" value="Glutaredoxin"/>
    <property type="match status" value="1"/>
</dbReference>
<dbReference type="InterPro" id="IPR000643">
    <property type="entry name" value="Iodothyronine_deiodinase"/>
</dbReference>
<dbReference type="InterPro" id="IPR008261">
    <property type="entry name" value="Iodothyronine_deiodinase_AS"/>
</dbReference>
<dbReference type="InterPro" id="IPR036249">
    <property type="entry name" value="Thioredoxin-like_sf"/>
</dbReference>
<dbReference type="PANTHER" id="PTHR11781">
    <property type="entry name" value="IODOTHYRONINE DEIODINASE"/>
    <property type="match status" value="1"/>
</dbReference>
<dbReference type="PANTHER" id="PTHR11781:SF20">
    <property type="entry name" value="TYPE II IODOTHYRONINE DEIODINASE"/>
    <property type="match status" value="1"/>
</dbReference>
<dbReference type="Pfam" id="PF00837">
    <property type="entry name" value="T4_deiodinase"/>
    <property type="match status" value="1"/>
</dbReference>
<dbReference type="PIRSF" id="PIRSF001330">
    <property type="entry name" value="IOD"/>
    <property type="match status" value="1"/>
</dbReference>
<dbReference type="SUPFAM" id="SSF52833">
    <property type="entry name" value="Thioredoxin-like"/>
    <property type="match status" value="1"/>
</dbReference>
<dbReference type="PROSITE" id="PS01205">
    <property type="entry name" value="T4_DEIODINASE"/>
    <property type="match status" value="1"/>
</dbReference>